<organism>
    <name type="scientific">Xanthomonas campestris pv. campestris (strain B100)</name>
    <dbReference type="NCBI Taxonomy" id="509169"/>
    <lineage>
        <taxon>Bacteria</taxon>
        <taxon>Pseudomonadati</taxon>
        <taxon>Pseudomonadota</taxon>
        <taxon>Gammaproteobacteria</taxon>
        <taxon>Lysobacterales</taxon>
        <taxon>Lysobacteraceae</taxon>
        <taxon>Xanthomonas</taxon>
    </lineage>
</organism>
<feature type="chain" id="PRO_0000334838" description="Leucine--tRNA ligase">
    <location>
        <begin position="1"/>
        <end position="885"/>
    </location>
</feature>
<feature type="short sequence motif" description="'HIGH' region">
    <location>
        <begin position="46"/>
        <end position="56"/>
    </location>
</feature>
<feature type="short sequence motif" description="'KMSKS' region">
    <location>
        <begin position="638"/>
        <end position="642"/>
    </location>
</feature>
<feature type="binding site" evidence="1">
    <location>
        <position position="641"/>
    </location>
    <ligand>
        <name>ATP</name>
        <dbReference type="ChEBI" id="CHEBI:30616"/>
    </ligand>
</feature>
<evidence type="ECO:0000255" key="1">
    <source>
        <dbReference type="HAMAP-Rule" id="MF_00049"/>
    </source>
</evidence>
<evidence type="ECO:0000305" key="2"/>
<name>SYL_XANCB</name>
<dbReference type="EC" id="6.1.1.4" evidence="1"/>
<dbReference type="EMBL" id="AM920689">
    <property type="protein sequence ID" value="CAP50891.1"/>
    <property type="status" value="ALT_INIT"/>
    <property type="molecule type" value="Genomic_DNA"/>
</dbReference>
<dbReference type="SMR" id="B0RR06"/>
<dbReference type="KEGG" id="xca:xcc-b100_1541"/>
<dbReference type="HOGENOM" id="CLU_004427_0_0_6"/>
<dbReference type="Proteomes" id="UP000001188">
    <property type="component" value="Chromosome"/>
</dbReference>
<dbReference type="GO" id="GO:0005829">
    <property type="term" value="C:cytosol"/>
    <property type="evidence" value="ECO:0007669"/>
    <property type="project" value="TreeGrafter"/>
</dbReference>
<dbReference type="GO" id="GO:0002161">
    <property type="term" value="F:aminoacyl-tRNA deacylase activity"/>
    <property type="evidence" value="ECO:0007669"/>
    <property type="project" value="InterPro"/>
</dbReference>
<dbReference type="GO" id="GO:0005524">
    <property type="term" value="F:ATP binding"/>
    <property type="evidence" value="ECO:0007669"/>
    <property type="project" value="UniProtKB-UniRule"/>
</dbReference>
<dbReference type="GO" id="GO:0004823">
    <property type="term" value="F:leucine-tRNA ligase activity"/>
    <property type="evidence" value="ECO:0007669"/>
    <property type="project" value="UniProtKB-UniRule"/>
</dbReference>
<dbReference type="GO" id="GO:0006429">
    <property type="term" value="P:leucyl-tRNA aminoacylation"/>
    <property type="evidence" value="ECO:0007669"/>
    <property type="project" value="UniProtKB-UniRule"/>
</dbReference>
<dbReference type="CDD" id="cd07958">
    <property type="entry name" value="Anticodon_Ia_Leu_BEm"/>
    <property type="match status" value="1"/>
</dbReference>
<dbReference type="CDD" id="cd00812">
    <property type="entry name" value="LeuRS_core"/>
    <property type="match status" value="1"/>
</dbReference>
<dbReference type="FunFam" id="1.10.730.10:FF:000003">
    <property type="entry name" value="Leucine--tRNA ligase"/>
    <property type="match status" value="1"/>
</dbReference>
<dbReference type="FunFam" id="2.20.28.290:FF:000001">
    <property type="entry name" value="Leucine--tRNA ligase"/>
    <property type="match status" value="1"/>
</dbReference>
<dbReference type="FunFam" id="3.10.20.590:FF:000001">
    <property type="entry name" value="Leucine--tRNA ligase"/>
    <property type="match status" value="1"/>
</dbReference>
<dbReference type="FunFam" id="3.40.50.620:FF:000003">
    <property type="entry name" value="Leucine--tRNA ligase"/>
    <property type="match status" value="1"/>
</dbReference>
<dbReference type="FunFam" id="3.40.50.620:FF:000124">
    <property type="entry name" value="Leucine--tRNA ligase"/>
    <property type="match status" value="1"/>
</dbReference>
<dbReference type="FunFam" id="3.90.740.10:FF:000012">
    <property type="entry name" value="Leucine--tRNA ligase"/>
    <property type="match status" value="1"/>
</dbReference>
<dbReference type="Gene3D" id="2.20.28.290">
    <property type="match status" value="1"/>
</dbReference>
<dbReference type="Gene3D" id="3.10.20.590">
    <property type="match status" value="1"/>
</dbReference>
<dbReference type="Gene3D" id="3.40.50.620">
    <property type="entry name" value="HUPs"/>
    <property type="match status" value="2"/>
</dbReference>
<dbReference type="Gene3D" id="1.10.730.10">
    <property type="entry name" value="Isoleucyl-tRNA Synthetase, Domain 1"/>
    <property type="match status" value="1"/>
</dbReference>
<dbReference type="Gene3D" id="3.90.740.10">
    <property type="entry name" value="Valyl/Leucyl/Isoleucyl-tRNA synthetase, editing domain"/>
    <property type="match status" value="1"/>
</dbReference>
<dbReference type="HAMAP" id="MF_00049_B">
    <property type="entry name" value="Leu_tRNA_synth_B"/>
    <property type="match status" value="1"/>
</dbReference>
<dbReference type="InterPro" id="IPR001412">
    <property type="entry name" value="aa-tRNA-synth_I_CS"/>
</dbReference>
<dbReference type="InterPro" id="IPR002300">
    <property type="entry name" value="aa-tRNA-synth_Ia"/>
</dbReference>
<dbReference type="InterPro" id="IPR002302">
    <property type="entry name" value="Leu-tRNA-ligase"/>
</dbReference>
<dbReference type="InterPro" id="IPR025709">
    <property type="entry name" value="Leu_tRNA-synth_edit"/>
</dbReference>
<dbReference type="InterPro" id="IPR013155">
    <property type="entry name" value="M/V/L/I-tRNA-synth_anticd-bd"/>
</dbReference>
<dbReference type="InterPro" id="IPR015413">
    <property type="entry name" value="Methionyl/Leucyl_tRNA_Synth"/>
</dbReference>
<dbReference type="InterPro" id="IPR014729">
    <property type="entry name" value="Rossmann-like_a/b/a_fold"/>
</dbReference>
<dbReference type="InterPro" id="IPR009080">
    <property type="entry name" value="tRNAsynth_Ia_anticodon-bd"/>
</dbReference>
<dbReference type="InterPro" id="IPR009008">
    <property type="entry name" value="Val/Leu/Ile-tRNA-synth_edit"/>
</dbReference>
<dbReference type="NCBIfam" id="TIGR00396">
    <property type="entry name" value="leuS_bact"/>
    <property type="match status" value="1"/>
</dbReference>
<dbReference type="PANTHER" id="PTHR43740:SF2">
    <property type="entry name" value="LEUCINE--TRNA LIGASE, MITOCHONDRIAL"/>
    <property type="match status" value="1"/>
</dbReference>
<dbReference type="PANTHER" id="PTHR43740">
    <property type="entry name" value="LEUCYL-TRNA SYNTHETASE"/>
    <property type="match status" value="1"/>
</dbReference>
<dbReference type="Pfam" id="PF08264">
    <property type="entry name" value="Anticodon_1"/>
    <property type="match status" value="1"/>
</dbReference>
<dbReference type="Pfam" id="PF00133">
    <property type="entry name" value="tRNA-synt_1"/>
    <property type="match status" value="2"/>
</dbReference>
<dbReference type="Pfam" id="PF13603">
    <property type="entry name" value="tRNA-synt_1_2"/>
    <property type="match status" value="1"/>
</dbReference>
<dbReference type="Pfam" id="PF09334">
    <property type="entry name" value="tRNA-synt_1g"/>
    <property type="match status" value="1"/>
</dbReference>
<dbReference type="PRINTS" id="PR00985">
    <property type="entry name" value="TRNASYNTHLEU"/>
</dbReference>
<dbReference type="SUPFAM" id="SSF47323">
    <property type="entry name" value="Anticodon-binding domain of a subclass of class I aminoacyl-tRNA synthetases"/>
    <property type="match status" value="1"/>
</dbReference>
<dbReference type="SUPFAM" id="SSF52374">
    <property type="entry name" value="Nucleotidylyl transferase"/>
    <property type="match status" value="1"/>
</dbReference>
<dbReference type="SUPFAM" id="SSF50677">
    <property type="entry name" value="ValRS/IleRS/LeuRS editing domain"/>
    <property type="match status" value="1"/>
</dbReference>
<dbReference type="PROSITE" id="PS00178">
    <property type="entry name" value="AA_TRNA_LIGASE_I"/>
    <property type="match status" value="1"/>
</dbReference>
<accession>B0RR06</accession>
<keyword id="KW-0030">Aminoacyl-tRNA synthetase</keyword>
<keyword id="KW-0067">ATP-binding</keyword>
<keyword id="KW-0963">Cytoplasm</keyword>
<keyword id="KW-0436">Ligase</keyword>
<keyword id="KW-0547">Nucleotide-binding</keyword>
<keyword id="KW-0648">Protein biosynthesis</keyword>
<comment type="catalytic activity">
    <reaction evidence="1">
        <text>tRNA(Leu) + L-leucine + ATP = L-leucyl-tRNA(Leu) + AMP + diphosphate</text>
        <dbReference type="Rhea" id="RHEA:11688"/>
        <dbReference type="Rhea" id="RHEA-COMP:9613"/>
        <dbReference type="Rhea" id="RHEA-COMP:9622"/>
        <dbReference type="ChEBI" id="CHEBI:30616"/>
        <dbReference type="ChEBI" id="CHEBI:33019"/>
        <dbReference type="ChEBI" id="CHEBI:57427"/>
        <dbReference type="ChEBI" id="CHEBI:78442"/>
        <dbReference type="ChEBI" id="CHEBI:78494"/>
        <dbReference type="ChEBI" id="CHEBI:456215"/>
        <dbReference type="EC" id="6.1.1.4"/>
    </reaction>
</comment>
<comment type="subcellular location">
    <subcellularLocation>
        <location evidence="1">Cytoplasm</location>
    </subcellularLocation>
</comment>
<comment type="similarity">
    <text evidence="1">Belongs to the class-I aminoacyl-tRNA synthetase family.</text>
</comment>
<comment type="sequence caution" evidence="2">
    <conflict type="erroneous initiation">
        <sequence resource="EMBL-CDS" id="CAP50891"/>
    </conflict>
</comment>
<reference key="1">
    <citation type="journal article" date="2008" name="J. Biotechnol.">
        <title>The genome of Xanthomonas campestris pv. campestris B100 and its use for the reconstruction of metabolic pathways involved in xanthan biosynthesis.</title>
        <authorList>
            <person name="Vorhoelter F.-J."/>
            <person name="Schneiker S."/>
            <person name="Goesmann A."/>
            <person name="Krause L."/>
            <person name="Bekel T."/>
            <person name="Kaiser O."/>
            <person name="Linke B."/>
            <person name="Patschkowski T."/>
            <person name="Rueckert C."/>
            <person name="Schmid J."/>
            <person name="Sidhu V.K."/>
            <person name="Sieber V."/>
            <person name="Tauch A."/>
            <person name="Watt S.A."/>
            <person name="Weisshaar B."/>
            <person name="Becker A."/>
            <person name="Niehaus K."/>
            <person name="Puehler A."/>
        </authorList>
    </citation>
    <scope>NUCLEOTIDE SEQUENCE [LARGE SCALE GENOMIC DNA]</scope>
    <source>
        <strain>B100</strain>
    </source>
</reference>
<sequence length="885" mass="99140">MSTVEPNAYDPQQVETSAQQFWDATRAFQVDENSDKPKFYCLSMLPYPSGALHMGHVRNYTISDVVSRYKRMTGHNVLQPMGWDAFGLPAENAAIKNKTAPAKWTYANIEHMRAQLKSLGYAIDWSREFATCTPDYYVHEQRMFTRLMRKGLAYRRNAVVNWDPIDQTVLANEQVIDGRGWRSGALVEKREIPQWFLRITDYAQELLDGLDQLDGWPDSVKTMQRNWIGRSEGLEIQFDVRDTTGAALDPLRVFTTRPDTLMGVTFVSIAAEHPLAQHAAKSNPELASMLETLKHGGVSEAELETQEKRGMATGLTAVHPISGEEVPVWVANFVLMGYGTGAVMAVPGHDQRDFEFANKYGLPIVQVVKLREPRNDDEQAWDATQWRDWYTDKSRELELINSAEFDGLDYHGAFEALAERFERKGQGQRRINYRLRDWGVSRQRYWGCPIPVIYCAKCGAVPVPEDQLPVVLPENVEFAGTGSPIKTDPTWRQTTCPECGGPAERETDTFDTFMESSWYVARYTSPNARDMVDRRANYWMPADLYVGGIEHAILHLMYFRFYHKLMRDARLVDSDEPVTNLLTQGMVIAETFYRDADNGGKDWINPADVEIQRDERGRVVGASLIADGQPVHIGGTEKMSKSKNNGVDPQAMVAKYGADTVRLFSMFAAPPEQSLEWNEAGVDGMARFMRRLWVQVHKHVGEGIDDELTKIVALGGPLSAEQKAIRRKTHETIGKVDDDYGRRHSFNTAIAAVMELSNALAKFDDASAQGRAVRQEALEAMVLLLNPITPHASHALWQVLGRGETLLENVPFPQVDAAALVRDALTLAIQVNGKLRGTIEVAADAAREQIEALALAEPNAAKFLDGLSVRKIIIVPGKIVNIVAG</sequence>
<protein>
    <recommendedName>
        <fullName evidence="1">Leucine--tRNA ligase</fullName>
        <ecNumber evidence="1">6.1.1.4</ecNumber>
    </recommendedName>
    <alternativeName>
        <fullName evidence="1">Leucyl-tRNA synthetase</fullName>
        <shortName evidence="1">LeuRS</shortName>
    </alternativeName>
</protein>
<gene>
    <name evidence="1" type="primary">leuS</name>
    <name type="ordered locus">xcc-b100_1541</name>
</gene>
<proteinExistence type="inferred from homology"/>